<protein>
    <recommendedName>
        <fullName evidence="1">Acetaldehyde dehydrogenase</fullName>
        <ecNumber evidence="1">1.2.1.10</ecNumber>
    </recommendedName>
    <alternativeName>
        <fullName evidence="1">Acetaldehyde dehydrogenase [acetylating]</fullName>
    </alternativeName>
</protein>
<sequence length="297" mass="32288">MKSKSSRTRVAILGSGSIGLDLMFKVKASEQFDLKFVVGRNANSDGLRLARSCNVETSSDGLDFLKAHEDAYDLVFDATSAAAHKVNNRFFSDAGKFVIDLTPAKVGRLCVPCINLDDMGAEQNVNLITCGGQASLPLAYALKQAVDEIDYLEVVSAIASRSAGIATRENIDEYMTTTEYALAKFSGAKKTKAILNINPAEPGVRMQTTLYAYARYRDFDRVRASVADMVEKVREYVPGYRLVVEPLESQGRITIGLTVRGRGDYLPEYAGNLDIINCAALAVASHRHATARLGATQ</sequence>
<reference key="1">
    <citation type="journal article" date="2010" name="Genome Biol. Evol.">
        <title>Continuing evolution of Burkholderia mallei through genome reduction and large-scale rearrangements.</title>
        <authorList>
            <person name="Losada L."/>
            <person name="Ronning C.M."/>
            <person name="DeShazer D."/>
            <person name="Woods D."/>
            <person name="Fedorova N."/>
            <person name="Kim H.S."/>
            <person name="Shabalina S.A."/>
            <person name="Pearson T.R."/>
            <person name="Brinkac L."/>
            <person name="Tan P."/>
            <person name="Nandi T."/>
            <person name="Crabtree J."/>
            <person name="Badger J."/>
            <person name="Beckstrom-Sternberg S."/>
            <person name="Saqib M."/>
            <person name="Schutzer S.E."/>
            <person name="Keim P."/>
            <person name="Nierman W.C."/>
        </authorList>
    </citation>
    <scope>NUCLEOTIDE SEQUENCE [LARGE SCALE GENOMIC DNA]</scope>
    <source>
        <strain>1710b</strain>
    </source>
</reference>
<keyword id="KW-0058">Aromatic hydrocarbons catabolism</keyword>
<keyword id="KW-0520">NAD</keyword>
<keyword id="KW-0560">Oxidoreductase</keyword>
<proteinExistence type="inferred from homology"/>
<comment type="catalytic activity">
    <reaction evidence="1">
        <text>acetaldehyde + NAD(+) + CoA = acetyl-CoA + NADH + H(+)</text>
        <dbReference type="Rhea" id="RHEA:23288"/>
        <dbReference type="ChEBI" id="CHEBI:15343"/>
        <dbReference type="ChEBI" id="CHEBI:15378"/>
        <dbReference type="ChEBI" id="CHEBI:57287"/>
        <dbReference type="ChEBI" id="CHEBI:57288"/>
        <dbReference type="ChEBI" id="CHEBI:57540"/>
        <dbReference type="ChEBI" id="CHEBI:57945"/>
        <dbReference type="EC" id="1.2.1.10"/>
    </reaction>
</comment>
<comment type="similarity">
    <text evidence="1">Belongs to the acetaldehyde dehydrogenase family.</text>
</comment>
<feature type="chain" id="PRO_0000387636" description="Acetaldehyde dehydrogenase">
    <location>
        <begin position="1"/>
        <end position="297"/>
    </location>
</feature>
<feature type="active site" description="Acyl-thioester intermediate" evidence="1">
    <location>
        <position position="130"/>
    </location>
</feature>
<feature type="binding site" evidence="1">
    <location>
        <begin position="15"/>
        <end position="18"/>
    </location>
    <ligand>
        <name>NAD(+)</name>
        <dbReference type="ChEBI" id="CHEBI:57540"/>
    </ligand>
</feature>
<feature type="binding site" evidence="1">
    <location>
        <begin position="162"/>
        <end position="170"/>
    </location>
    <ligand>
        <name>NAD(+)</name>
        <dbReference type="ChEBI" id="CHEBI:57540"/>
    </ligand>
</feature>
<feature type="binding site" evidence="1">
    <location>
        <position position="272"/>
    </location>
    <ligand>
        <name>NAD(+)</name>
        <dbReference type="ChEBI" id="CHEBI:57540"/>
    </ligand>
</feature>
<gene>
    <name type="primary">mhpF</name>
    <name type="ordered locus">BURPS1710b_A0891</name>
</gene>
<name>ACDH_BURP1</name>
<organism>
    <name type="scientific">Burkholderia pseudomallei (strain 1710b)</name>
    <dbReference type="NCBI Taxonomy" id="320372"/>
    <lineage>
        <taxon>Bacteria</taxon>
        <taxon>Pseudomonadati</taxon>
        <taxon>Pseudomonadota</taxon>
        <taxon>Betaproteobacteria</taxon>
        <taxon>Burkholderiales</taxon>
        <taxon>Burkholderiaceae</taxon>
        <taxon>Burkholderia</taxon>
        <taxon>pseudomallei group</taxon>
    </lineage>
</organism>
<accession>Q3JK54</accession>
<dbReference type="EC" id="1.2.1.10" evidence="1"/>
<dbReference type="EMBL" id="CP000125">
    <property type="protein sequence ID" value="ABA53130.1"/>
    <property type="molecule type" value="Genomic_DNA"/>
</dbReference>
<dbReference type="RefSeq" id="WP_004529065.1">
    <property type="nucleotide sequence ID" value="NC_007435.1"/>
</dbReference>
<dbReference type="SMR" id="Q3JK54"/>
<dbReference type="EnsemblBacteria" id="ABA53130">
    <property type="protein sequence ID" value="ABA53130"/>
    <property type="gene ID" value="BURPS1710b_A0891"/>
</dbReference>
<dbReference type="KEGG" id="bpm:BURPS1710b_A0891"/>
<dbReference type="HOGENOM" id="CLU_062208_0_0_4"/>
<dbReference type="Proteomes" id="UP000002700">
    <property type="component" value="Chromosome II"/>
</dbReference>
<dbReference type="GO" id="GO:0008774">
    <property type="term" value="F:acetaldehyde dehydrogenase (acetylating) activity"/>
    <property type="evidence" value="ECO:0007669"/>
    <property type="project" value="UniProtKB-UniRule"/>
</dbReference>
<dbReference type="GO" id="GO:0051287">
    <property type="term" value="F:NAD binding"/>
    <property type="evidence" value="ECO:0007669"/>
    <property type="project" value="UniProtKB-UniRule"/>
</dbReference>
<dbReference type="GO" id="GO:0009056">
    <property type="term" value="P:catabolic process"/>
    <property type="evidence" value="ECO:0007669"/>
    <property type="project" value="UniProtKB-KW"/>
</dbReference>
<dbReference type="CDD" id="cd23933">
    <property type="entry name" value="ALDH_C"/>
    <property type="match status" value="1"/>
</dbReference>
<dbReference type="Gene3D" id="3.30.360.10">
    <property type="entry name" value="Dihydrodipicolinate Reductase, domain 2"/>
    <property type="match status" value="1"/>
</dbReference>
<dbReference type="Gene3D" id="3.40.50.720">
    <property type="entry name" value="NAD(P)-binding Rossmann-like Domain"/>
    <property type="match status" value="1"/>
</dbReference>
<dbReference type="HAMAP" id="MF_01657">
    <property type="entry name" value="Ac_ald_DH_ac"/>
    <property type="match status" value="1"/>
</dbReference>
<dbReference type="InterPro" id="IPR003361">
    <property type="entry name" value="Acetaldehyde_dehydrogenase"/>
</dbReference>
<dbReference type="InterPro" id="IPR015426">
    <property type="entry name" value="Acetylaldehyde_DH_C"/>
</dbReference>
<dbReference type="InterPro" id="IPR036291">
    <property type="entry name" value="NAD(P)-bd_dom_sf"/>
</dbReference>
<dbReference type="InterPro" id="IPR000534">
    <property type="entry name" value="Semialdehyde_DH_NAD-bd"/>
</dbReference>
<dbReference type="NCBIfam" id="TIGR03215">
    <property type="entry name" value="ac_ald_DH_ac"/>
    <property type="match status" value="1"/>
</dbReference>
<dbReference type="NCBIfam" id="NF006157">
    <property type="entry name" value="PRK08300.1"/>
    <property type="match status" value="1"/>
</dbReference>
<dbReference type="Pfam" id="PF09290">
    <property type="entry name" value="AcetDehyd-dimer"/>
    <property type="match status" value="1"/>
</dbReference>
<dbReference type="Pfam" id="PF01118">
    <property type="entry name" value="Semialdhyde_dh"/>
    <property type="match status" value="1"/>
</dbReference>
<dbReference type="PIRSF" id="PIRSF015689">
    <property type="entry name" value="Actaldh_dh_actl"/>
    <property type="match status" value="1"/>
</dbReference>
<dbReference type="SMART" id="SM00859">
    <property type="entry name" value="Semialdhyde_dh"/>
    <property type="match status" value="1"/>
</dbReference>
<dbReference type="SUPFAM" id="SSF55347">
    <property type="entry name" value="Glyceraldehyde-3-phosphate dehydrogenase-like, C-terminal domain"/>
    <property type="match status" value="1"/>
</dbReference>
<dbReference type="SUPFAM" id="SSF51735">
    <property type="entry name" value="NAD(P)-binding Rossmann-fold domains"/>
    <property type="match status" value="1"/>
</dbReference>
<evidence type="ECO:0000255" key="1">
    <source>
        <dbReference type="HAMAP-Rule" id="MF_01657"/>
    </source>
</evidence>